<evidence type="ECO:0000255" key="1">
    <source>
        <dbReference type="HAMAP-Rule" id="MF_00210"/>
    </source>
</evidence>
<evidence type="ECO:0000305" key="2"/>
<sequence length="427" mass="46786">MQNSLDLKPISHVNGTVCLPGSKSISNRVLLLSSIAKGTTCLTNLLNSHDTQHMLNALKKLGVRYNLSDDKKTCHVQGIGGPFHLSEAISLYLGNAGTAIRPLLSVLSLHKNNILLNGDDRMHERPIGDLVDALIQGGAVIEYKKNKGYPPICTKGGFLGGSIFLNGNISSQFLTSLLISTPLALKDTTIFIKGNLVSKPYIDITLNLIKIFGVNIEHDSYNVFYIKGKQQYKTPGKYTIEGDASSASYFLAAAAIKGGSIKVTGVGKKSIQGDIEFANILEKMGATIFWEDYSITCTRNKLNAIDLDMNHIPDAAMTVAILALFSKGTTIIRNIYNWRVKETDRLSAMTIELRKIGAIVEEGRDFLSISPPIFFQYSSIETYNDHRMAMCFSLISLSGVGVNILNPNCISKTFPSYFKDFLSISKI</sequence>
<gene>
    <name evidence="1" type="primary">aroA</name>
    <name type="ordered locus">BU311</name>
</gene>
<dbReference type="EC" id="2.5.1.19" evidence="1"/>
<dbReference type="EMBL" id="BA000003">
    <property type="protein sequence ID" value="BAB13019.1"/>
    <property type="molecule type" value="Genomic_DNA"/>
</dbReference>
<dbReference type="RefSeq" id="NP_240133.1">
    <property type="nucleotide sequence ID" value="NC_002528.1"/>
</dbReference>
<dbReference type="RefSeq" id="WP_009874265.1">
    <property type="nucleotide sequence ID" value="NC_002528.1"/>
</dbReference>
<dbReference type="SMR" id="P57396"/>
<dbReference type="STRING" id="563178.BUAP5A_304"/>
<dbReference type="EnsemblBacteria" id="BAB13019">
    <property type="protein sequence ID" value="BAB13019"/>
    <property type="gene ID" value="BAB13019"/>
</dbReference>
<dbReference type="KEGG" id="buc:BU311"/>
<dbReference type="PATRIC" id="fig|107806.10.peg.323"/>
<dbReference type="eggNOG" id="COG0128">
    <property type="taxonomic scope" value="Bacteria"/>
</dbReference>
<dbReference type="HOGENOM" id="CLU_024321_0_0_6"/>
<dbReference type="UniPathway" id="UPA00053">
    <property type="reaction ID" value="UER00089"/>
</dbReference>
<dbReference type="Proteomes" id="UP000001806">
    <property type="component" value="Chromosome"/>
</dbReference>
<dbReference type="GO" id="GO:0005737">
    <property type="term" value="C:cytoplasm"/>
    <property type="evidence" value="ECO:0007669"/>
    <property type="project" value="UniProtKB-SubCell"/>
</dbReference>
<dbReference type="GO" id="GO:0003866">
    <property type="term" value="F:3-phosphoshikimate 1-carboxyvinyltransferase activity"/>
    <property type="evidence" value="ECO:0007669"/>
    <property type="project" value="UniProtKB-UniRule"/>
</dbReference>
<dbReference type="GO" id="GO:0008652">
    <property type="term" value="P:amino acid biosynthetic process"/>
    <property type="evidence" value="ECO:0007669"/>
    <property type="project" value="UniProtKB-KW"/>
</dbReference>
<dbReference type="GO" id="GO:0009073">
    <property type="term" value="P:aromatic amino acid family biosynthetic process"/>
    <property type="evidence" value="ECO:0007669"/>
    <property type="project" value="UniProtKB-KW"/>
</dbReference>
<dbReference type="GO" id="GO:0009423">
    <property type="term" value="P:chorismate biosynthetic process"/>
    <property type="evidence" value="ECO:0007669"/>
    <property type="project" value="UniProtKB-UniRule"/>
</dbReference>
<dbReference type="CDD" id="cd01556">
    <property type="entry name" value="EPSP_synthase"/>
    <property type="match status" value="1"/>
</dbReference>
<dbReference type="FunFam" id="3.65.10.10:FF:000003">
    <property type="entry name" value="3-phosphoshikimate 1-carboxyvinyltransferase"/>
    <property type="match status" value="1"/>
</dbReference>
<dbReference type="FunFam" id="3.65.10.10:FF:000004">
    <property type="entry name" value="3-phosphoshikimate 1-carboxyvinyltransferase"/>
    <property type="match status" value="1"/>
</dbReference>
<dbReference type="Gene3D" id="3.65.10.10">
    <property type="entry name" value="Enolpyruvate transferase domain"/>
    <property type="match status" value="2"/>
</dbReference>
<dbReference type="HAMAP" id="MF_00210">
    <property type="entry name" value="EPSP_synth"/>
    <property type="match status" value="1"/>
</dbReference>
<dbReference type="InterPro" id="IPR001986">
    <property type="entry name" value="Enolpyruvate_Tfrase_dom"/>
</dbReference>
<dbReference type="InterPro" id="IPR036968">
    <property type="entry name" value="Enolpyruvate_Tfrase_sf"/>
</dbReference>
<dbReference type="InterPro" id="IPR006264">
    <property type="entry name" value="EPSP_synthase"/>
</dbReference>
<dbReference type="InterPro" id="IPR023193">
    <property type="entry name" value="EPSP_synthase_CS"/>
</dbReference>
<dbReference type="InterPro" id="IPR013792">
    <property type="entry name" value="RNA3'P_cycl/enolpyr_Trfase_a/b"/>
</dbReference>
<dbReference type="NCBIfam" id="TIGR01356">
    <property type="entry name" value="aroA"/>
    <property type="match status" value="1"/>
</dbReference>
<dbReference type="PANTHER" id="PTHR21090">
    <property type="entry name" value="AROM/DEHYDROQUINATE SYNTHASE"/>
    <property type="match status" value="1"/>
</dbReference>
<dbReference type="PANTHER" id="PTHR21090:SF5">
    <property type="entry name" value="PENTAFUNCTIONAL AROM POLYPEPTIDE"/>
    <property type="match status" value="1"/>
</dbReference>
<dbReference type="Pfam" id="PF00275">
    <property type="entry name" value="EPSP_synthase"/>
    <property type="match status" value="1"/>
</dbReference>
<dbReference type="PIRSF" id="PIRSF000505">
    <property type="entry name" value="EPSPS"/>
    <property type="match status" value="1"/>
</dbReference>
<dbReference type="SUPFAM" id="SSF55205">
    <property type="entry name" value="EPT/RTPC-like"/>
    <property type="match status" value="1"/>
</dbReference>
<dbReference type="PROSITE" id="PS00104">
    <property type="entry name" value="EPSP_SYNTHASE_1"/>
    <property type="match status" value="1"/>
</dbReference>
<dbReference type="PROSITE" id="PS00885">
    <property type="entry name" value="EPSP_SYNTHASE_2"/>
    <property type="match status" value="1"/>
</dbReference>
<organism>
    <name type="scientific">Buchnera aphidicola subsp. Acyrthosiphon pisum (strain APS)</name>
    <name type="common">Acyrthosiphon pisum symbiotic bacterium</name>
    <dbReference type="NCBI Taxonomy" id="107806"/>
    <lineage>
        <taxon>Bacteria</taxon>
        <taxon>Pseudomonadati</taxon>
        <taxon>Pseudomonadota</taxon>
        <taxon>Gammaproteobacteria</taxon>
        <taxon>Enterobacterales</taxon>
        <taxon>Erwiniaceae</taxon>
        <taxon>Buchnera</taxon>
    </lineage>
</organism>
<comment type="function">
    <text evidence="1">Catalyzes the transfer of the enolpyruvyl moiety of phosphoenolpyruvate (PEP) to the 5-hydroxyl of shikimate-3-phosphate (S3P) to produce enolpyruvyl shikimate-3-phosphate and inorganic phosphate.</text>
</comment>
<comment type="catalytic activity">
    <reaction evidence="1">
        <text>3-phosphoshikimate + phosphoenolpyruvate = 5-O-(1-carboxyvinyl)-3-phosphoshikimate + phosphate</text>
        <dbReference type="Rhea" id="RHEA:21256"/>
        <dbReference type="ChEBI" id="CHEBI:43474"/>
        <dbReference type="ChEBI" id="CHEBI:57701"/>
        <dbReference type="ChEBI" id="CHEBI:58702"/>
        <dbReference type="ChEBI" id="CHEBI:145989"/>
        <dbReference type="EC" id="2.5.1.19"/>
    </reaction>
    <physiologicalReaction direction="left-to-right" evidence="1">
        <dbReference type="Rhea" id="RHEA:21257"/>
    </physiologicalReaction>
</comment>
<comment type="pathway">
    <text evidence="1">Metabolic intermediate biosynthesis; chorismate biosynthesis; chorismate from D-erythrose 4-phosphate and phosphoenolpyruvate: step 6/7.</text>
</comment>
<comment type="subunit">
    <text evidence="1">Monomer.</text>
</comment>
<comment type="subcellular location">
    <subcellularLocation>
        <location evidence="1">Cytoplasm</location>
    </subcellularLocation>
</comment>
<comment type="similarity">
    <text evidence="1 2">Belongs to the EPSP synthase family.</text>
</comment>
<keyword id="KW-0028">Amino-acid biosynthesis</keyword>
<keyword id="KW-0057">Aromatic amino acid biosynthesis</keyword>
<keyword id="KW-0963">Cytoplasm</keyword>
<keyword id="KW-1185">Reference proteome</keyword>
<keyword id="KW-0808">Transferase</keyword>
<protein>
    <recommendedName>
        <fullName evidence="1">3-phosphoshikimate 1-carboxyvinyltransferase</fullName>
        <ecNumber evidence="1">2.5.1.19</ecNumber>
    </recommendedName>
    <alternativeName>
        <fullName evidence="1">5-enolpyruvylshikimate-3-phosphate synthase</fullName>
        <shortName evidence="1">EPSP synthase</shortName>
        <shortName evidence="1">EPSPS</shortName>
    </alternativeName>
</protein>
<name>AROA_BUCAI</name>
<accession>P57396</accession>
<reference key="1">
    <citation type="journal article" date="2000" name="Nature">
        <title>Genome sequence of the endocellular bacterial symbiont of aphids Buchnera sp. APS.</title>
        <authorList>
            <person name="Shigenobu S."/>
            <person name="Watanabe H."/>
            <person name="Hattori M."/>
            <person name="Sakaki Y."/>
            <person name="Ishikawa H."/>
        </authorList>
    </citation>
    <scope>NUCLEOTIDE SEQUENCE [LARGE SCALE GENOMIC DNA]</scope>
    <source>
        <strain>APS</strain>
    </source>
</reference>
<feature type="chain" id="PRO_0000088235" description="3-phosphoshikimate 1-carboxyvinyltransferase">
    <location>
        <begin position="1"/>
        <end position="427"/>
    </location>
</feature>
<feature type="active site" description="Proton acceptor" evidence="1">
    <location>
        <position position="314"/>
    </location>
</feature>
<feature type="binding site" evidence="1">
    <location>
        <position position="23"/>
    </location>
    <ligand>
        <name>3-phosphoshikimate</name>
        <dbReference type="ChEBI" id="CHEBI:145989"/>
    </ligand>
</feature>
<feature type="binding site" evidence="1">
    <location>
        <position position="23"/>
    </location>
    <ligand>
        <name>phosphoenolpyruvate</name>
        <dbReference type="ChEBI" id="CHEBI:58702"/>
    </ligand>
</feature>
<feature type="binding site" evidence="1">
    <location>
        <position position="24"/>
    </location>
    <ligand>
        <name>3-phosphoshikimate</name>
        <dbReference type="ChEBI" id="CHEBI:145989"/>
    </ligand>
</feature>
<feature type="binding site" evidence="1">
    <location>
        <position position="28"/>
    </location>
    <ligand>
        <name>3-phosphoshikimate</name>
        <dbReference type="ChEBI" id="CHEBI:145989"/>
    </ligand>
</feature>
<feature type="binding site" evidence="1">
    <location>
        <position position="97"/>
    </location>
    <ligand>
        <name>phosphoenolpyruvate</name>
        <dbReference type="ChEBI" id="CHEBI:58702"/>
    </ligand>
</feature>
<feature type="binding site" evidence="1">
    <location>
        <position position="125"/>
    </location>
    <ligand>
        <name>phosphoenolpyruvate</name>
        <dbReference type="ChEBI" id="CHEBI:58702"/>
    </ligand>
</feature>
<feature type="binding site" evidence="1">
    <location>
        <position position="170"/>
    </location>
    <ligand>
        <name>3-phosphoshikimate</name>
        <dbReference type="ChEBI" id="CHEBI:145989"/>
    </ligand>
</feature>
<feature type="binding site" evidence="1">
    <location>
        <position position="171"/>
    </location>
    <ligand>
        <name>3-phosphoshikimate</name>
        <dbReference type="ChEBI" id="CHEBI:145989"/>
    </ligand>
</feature>
<feature type="binding site" evidence="1">
    <location>
        <position position="172"/>
    </location>
    <ligand>
        <name>3-phosphoshikimate</name>
        <dbReference type="ChEBI" id="CHEBI:145989"/>
    </ligand>
</feature>
<feature type="binding site" evidence="1">
    <location>
        <position position="172"/>
    </location>
    <ligand>
        <name>phosphoenolpyruvate</name>
        <dbReference type="ChEBI" id="CHEBI:58702"/>
    </ligand>
</feature>
<feature type="binding site" evidence="1">
    <location>
        <position position="198"/>
    </location>
    <ligand>
        <name>3-phosphoshikimate</name>
        <dbReference type="ChEBI" id="CHEBI:145989"/>
    </ligand>
</feature>
<feature type="binding site" evidence="1">
    <location>
        <position position="314"/>
    </location>
    <ligand>
        <name>3-phosphoshikimate</name>
        <dbReference type="ChEBI" id="CHEBI:145989"/>
    </ligand>
</feature>
<feature type="binding site" evidence="1">
    <location>
        <position position="337"/>
    </location>
    <ligand>
        <name>3-phosphoshikimate</name>
        <dbReference type="ChEBI" id="CHEBI:145989"/>
    </ligand>
</feature>
<feature type="binding site" evidence="1">
    <location>
        <position position="341"/>
    </location>
    <ligand>
        <name>3-phosphoshikimate</name>
        <dbReference type="ChEBI" id="CHEBI:145989"/>
    </ligand>
</feature>
<feature type="binding site" evidence="1">
    <location>
        <position position="345"/>
    </location>
    <ligand>
        <name>phosphoenolpyruvate</name>
        <dbReference type="ChEBI" id="CHEBI:58702"/>
    </ligand>
</feature>
<feature type="binding site" evidence="1">
    <location>
        <position position="387"/>
    </location>
    <ligand>
        <name>phosphoenolpyruvate</name>
        <dbReference type="ChEBI" id="CHEBI:58702"/>
    </ligand>
</feature>
<feature type="binding site" evidence="1">
    <location>
        <position position="412"/>
    </location>
    <ligand>
        <name>phosphoenolpyruvate</name>
        <dbReference type="ChEBI" id="CHEBI:58702"/>
    </ligand>
</feature>
<proteinExistence type="inferred from homology"/>